<sequence>MKVLRFNQDASCCVVNSGANELTVYNCDPFGKCFEFNISNVNGDSNDNGIGYDSLEAGSSSIESQVIAEMLFSTSLLAVVDKGQGINTGKKLKIVNIKKRSLICEIAFPSLIVDVVMNRKRICVLLDNDQIFIYDISCMKLMETLDLWESNNEGNLNDHIKVGERASNMINENLKNGNELDRIRSKSNNNNDQTNSDNGRSRTYSINGSHKIKPQLTLSGNDNSILCYSKYSSSKQNPARILNDIVVYDALNLKPINYLNSVHKGCVLKTSVSIDGKLLATASEKGTIIRIHKTGVDSDFASGPLLYKEFRRGSRPSHIHQLLFNKDSTLLVCVGDSDTIHIFRTDDDGLALDGIDGDIGSDSGGSLELIKNRIPHEQVKKFFSRKIKSHIPNQNLHRDFAHINMDRIVHTVVGFPEEFDNKIYVASDDGSFKTYTIPSKHGQCVLNKTSHFI</sequence>
<feature type="chain" id="PRO_0000050877" description="Autophagy-related protein 21">
    <location>
        <begin position="1"/>
        <end position="453"/>
    </location>
</feature>
<feature type="repeat" description="WD 1">
    <location>
        <begin position="4"/>
        <end position="137"/>
    </location>
</feature>
<feature type="repeat" description="WD 2">
    <location>
        <begin position="252"/>
        <end position="347"/>
    </location>
</feature>
<feature type="repeat" description="WD 3">
    <location>
        <begin position="419"/>
        <end position="453"/>
    </location>
</feature>
<feature type="region of interest" description="Disordered" evidence="3">
    <location>
        <begin position="177"/>
        <end position="207"/>
    </location>
</feature>
<feature type="short sequence motif" description="L/FRRG motif" evidence="2">
    <location>
        <begin position="310"/>
        <end position="314"/>
    </location>
</feature>
<feature type="compositionally biased region" description="Low complexity" evidence="3">
    <location>
        <begin position="187"/>
        <end position="198"/>
    </location>
</feature>
<evidence type="ECO:0000250" key="1"/>
<evidence type="ECO:0000250" key="2">
    <source>
        <dbReference type="UniProtKB" id="Q02887"/>
    </source>
</evidence>
<evidence type="ECO:0000256" key="3">
    <source>
        <dbReference type="SAM" id="MobiDB-lite"/>
    </source>
</evidence>
<evidence type="ECO:0000305" key="4"/>
<keyword id="KW-0072">Autophagy</keyword>
<keyword id="KW-0963">Cytoplasm</keyword>
<keyword id="KW-0472">Membrane</keyword>
<keyword id="KW-0653">Protein transport</keyword>
<keyword id="KW-1185">Reference proteome</keyword>
<keyword id="KW-0677">Repeat</keyword>
<keyword id="KW-0813">Transport</keyword>
<keyword id="KW-0926">Vacuole</keyword>
<keyword id="KW-0853">WD repeat</keyword>
<organism>
    <name type="scientific">Candida glabrata (strain ATCC 2001 / BCRC 20586 / JCM 3761 / NBRC 0622 / NRRL Y-65 / CBS 138)</name>
    <name type="common">Yeast</name>
    <name type="synonym">Nakaseomyces glabratus</name>
    <dbReference type="NCBI Taxonomy" id="284593"/>
    <lineage>
        <taxon>Eukaryota</taxon>
        <taxon>Fungi</taxon>
        <taxon>Dikarya</taxon>
        <taxon>Ascomycota</taxon>
        <taxon>Saccharomycotina</taxon>
        <taxon>Saccharomycetes</taxon>
        <taxon>Saccharomycetales</taxon>
        <taxon>Saccharomycetaceae</taxon>
        <taxon>Nakaseomyces</taxon>
    </lineage>
</organism>
<protein>
    <recommendedName>
        <fullName>Autophagy-related protein 21</fullName>
    </recommendedName>
</protein>
<comment type="function">
    <text evidence="1">Required for cytoplasm to vacuole transport (Cvt) vesicles formation and mitophagy. Involved in binding of phosphatidylethanolamine to ATG8 and in recruitment of ATG8 and ATG5 to the pre-autophagosomal structure. Protects ATG8 from ARG4-mediated cleavage (By similarity).</text>
</comment>
<comment type="subcellular location">
    <subcellularLocation>
        <location evidence="1">Cytoplasm</location>
    </subcellularLocation>
    <subcellularLocation>
        <location evidence="1">Membrane</location>
        <topology evidence="1">Peripheral membrane protein</topology>
    </subcellularLocation>
    <subcellularLocation>
        <location evidence="1">Vacuole membrane</location>
        <topology evidence="1">Peripheral membrane protein</topology>
    </subcellularLocation>
    <text evidence="1">Vacuolar and perivacuolar punctate structures.</text>
</comment>
<comment type="domain">
    <text evidence="1">Contains a beta-propeller domain involved in specific binding to phosphatidylinositol 3,5-bisphosphate (PIP2).</text>
</comment>
<comment type="domain">
    <text evidence="2">The L/FRRG motif is essential for the cytoplasm to vacuole transport (Cvt) pathway and for the recruitment of ATG8 and ATG16 to the PAS in nutrient-rich medium and in both its recruitment to and dissociation from the PAS under starvation conditions.</text>
</comment>
<comment type="similarity">
    <text evidence="4">Belongs to the WD repeat PROPPIN family.</text>
</comment>
<proteinExistence type="inferred from homology"/>
<dbReference type="EMBL" id="CR380954">
    <property type="protein sequence ID" value="CAG59983.1"/>
    <property type="molecule type" value="Genomic_DNA"/>
</dbReference>
<dbReference type="RefSeq" id="XP_447050.1">
    <property type="nucleotide sequence ID" value="XM_447050.1"/>
</dbReference>
<dbReference type="SMR" id="Q6FRU4"/>
<dbReference type="FunCoup" id="Q6FRU4">
    <property type="interactions" value="21"/>
</dbReference>
<dbReference type="STRING" id="284593.Q6FRU4"/>
<dbReference type="EnsemblFungi" id="CAGL0H05841g-T">
    <property type="protein sequence ID" value="CAGL0H05841g-T-p1"/>
    <property type="gene ID" value="CAGL0H05841g"/>
</dbReference>
<dbReference type="KEGG" id="cgr:2888594"/>
<dbReference type="CGD" id="CAL0131660">
    <property type="gene designation" value="CAGL0H05841g"/>
</dbReference>
<dbReference type="VEuPathDB" id="FungiDB:CAGL0H05841g"/>
<dbReference type="eggNOG" id="KOG2110">
    <property type="taxonomic scope" value="Eukaryota"/>
</dbReference>
<dbReference type="HOGENOM" id="CLU_025895_5_2_1"/>
<dbReference type="InParanoid" id="Q6FRU4"/>
<dbReference type="OMA" id="MNRKRMC"/>
<dbReference type="Proteomes" id="UP000002428">
    <property type="component" value="Chromosome H"/>
</dbReference>
<dbReference type="GO" id="GO:0005829">
    <property type="term" value="C:cytosol"/>
    <property type="evidence" value="ECO:0007669"/>
    <property type="project" value="EnsemblFungi"/>
</dbReference>
<dbReference type="GO" id="GO:0005768">
    <property type="term" value="C:endosome"/>
    <property type="evidence" value="ECO:0007669"/>
    <property type="project" value="EnsemblFungi"/>
</dbReference>
<dbReference type="GO" id="GO:0000329">
    <property type="term" value="C:fungal-type vacuole membrane"/>
    <property type="evidence" value="ECO:0007669"/>
    <property type="project" value="EnsemblFungi"/>
</dbReference>
<dbReference type="GO" id="GO:0000407">
    <property type="term" value="C:phagophore assembly site"/>
    <property type="evidence" value="ECO:0007669"/>
    <property type="project" value="EnsemblFungi"/>
</dbReference>
<dbReference type="GO" id="GO:0080025">
    <property type="term" value="F:phosphatidylinositol-3,5-bisphosphate binding"/>
    <property type="evidence" value="ECO:0007669"/>
    <property type="project" value="EnsemblFungi"/>
</dbReference>
<dbReference type="GO" id="GO:0032266">
    <property type="term" value="F:phosphatidylinositol-3-phosphate binding"/>
    <property type="evidence" value="ECO:0007669"/>
    <property type="project" value="EnsemblFungi"/>
</dbReference>
<dbReference type="GO" id="GO:0070273">
    <property type="term" value="F:phosphatidylinositol-4-phosphate binding"/>
    <property type="evidence" value="ECO:0007669"/>
    <property type="project" value="EnsemblFungi"/>
</dbReference>
<dbReference type="GO" id="GO:0000422">
    <property type="term" value="P:autophagy of mitochondrion"/>
    <property type="evidence" value="ECO:0007669"/>
    <property type="project" value="EnsemblFungi"/>
</dbReference>
<dbReference type="GO" id="GO:0032258">
    <property type="term" value="P:cytoplasm to vacuole targeting by the Cvt pathway"/>
    <property type="evidence" value="ECO:0007669"/>
    <property type="project" value="EnsemblFungi"/>
</dbReference>
<dbReference type="GO" id="GO:0034727">
    <property type="term" value="P:piecemeal microautophagy of the nucleus"/>
    <property type="evidence" value="ECO:0007669"/>
    <property type="project" value="EnsemblFungi"/>
</dbReference>
<dbReference type="GO" id="GO:0034497">
    <property type="term" value="P:protein localization to phagophore assembly site"/>
    <property type="evidence" value="ECO:0007669"/>
    <property type="project" value="EnsemblFungi"/>
</dbReference>
<dbReference type="GO" id="GO:0016050">
    <property type="term" value="P:vesicle organization"/>
    <property type="evidence" value="ECO:0007669"/>
    <property type="project" value="EnsemblFungi"/>
</dbReference>
<dbReference type="Gene3D" id="2.130.10.10">
    <property type="entry name" value="YVTN repeat-like/Quinoprotein amine dehydrogenase"/>
    <property type="match status" value="1"/>
</dbReference>
<dbReference type="InterPro" id="IPR048720">
    <property type="entry name" value="PROPPIN"/>
</dbReference>
<dbReference type="InterPro" id="IPR015943">
    <property type="entry name" value="WD40/YVTN_repeat-like_dom_sf"/>
</dbReference>
<dbReference type="InterPro" id="IPR036322">
    <property type="entry name" value="WD40_repeat_dom_sf"/>
</dbReference>
<dbReference type="PANTHER" id="PTHR11227">
    <property type="entry name" value="WD-REPEAT PROTEIN INTERACTING WITH PHOSPHOINOSIDES WIPI -RELATED"/>
    <property type="match status" value="1"/>
</dbReference>
<dbReference type="Pfam" id="PF21032">
    <property type="entry name" value="PROPPIN"/>
    <property type="match status" value="2"/>
</dbReference>
<dbReference type="SUPFAM" id="SSF50978">
    <property type="entry name" value="WD40 repeat-like"/>
    <property type="match status" value="1"/>
</dbReference>
<gene>
    <name type="primary">ATG21</name>
    <name type="ordered locus">CAGL0H05841g</name>
</gene>
<name>ATG21_CANGA</name>
<reference key="1">
    <citation type="journal article" date="2004" name="Nature">
        <title>Genome evolution in yeasts.</title>
        <authorList>
            <person name="Dujon B."/>
            <person name="Sherman D."/>
            <person name="Fischer G."/>
            <person name="Durrens P."/>
            <person name="Casaregola S."/>
            <person name="Lafontaine I."/>
            <person name="de Montigny J."/>
            <person name="Marck C."/>
            <person name="Neuveglise C."/>
            <person name="Talla E."/>
            <person name="Goffard N."/>
            <person name="Frangeul L."/>
            <person name="Aigle M."/>
            <person name="Anthouard V."/>
            <person name="Babour A."/>
            <person name="Barbe V."/>
            <person name="Barnay S."/>
            <person name="Blanchin S."/>
            <person name="Beckerich J.-M."/>
            <person name="Beyne E."/>
            <person name="Bleykasten C."/>
            <person name="Boisrame A."/>
            <person name="Boyer J."/>
            <person name="Cattolico L."/>
            <person name="Confanioleri F."/>
            <person name="de Daruvar A."/>
            <person name="Despons L."/>
            <person name="Fabre E."/>
            <person name="Fairhead C."/>
            <person name="Ferry-Dumazet H."/>
            <person name="Groppi A."/>
            <person name="Hantraye F."/>
            <person name="Hennequin C."/>
            <person name="Jauniaux N."/>
            <person name="Joyet P."/>
            <person name="Kachouri R."/>
            <person name="Kerrest A."/>
            <person name="Koszul R."/>
            <person name="Lemaire M."/>
            <person name="Lesur I."/>
            <person name="Ma L."/>
            <person name="Muller H."/>
            <person name="Nicaud J.-M."/>
            <person name="Nikolski M."/>
            <person name="Oztas S."/>
            <person name="Ozier-Kalogeropoulos O."/>
            <person name="Pellenz S."/>
            <person name="Potier S."/>
            <person name="Richard G.-F."/>
            <person name="Straub M.-L."/>
            <person name="Suleau A."/>
            <person name="Swennen D."/>
            <person name="Tekaia F."/>
            <person name="Wesolowski-Louvel M."/>
            <person name="Westhof E."/>
            <person name="Wirth B."/>
            <person name="Zeniou-Meyer M."/>
            <person name="Zivanovic Y."/>
            <person name="Bolotin-Fukuhara M."/>
            <person name="Thierry A."/>
            <person name="Bouchier C."/>
            <person name="Caudron B."/>
            <person name="Scarpelli C."/>
            <person name="Gaillardin C."/>
            <person name="Weissenbach J."/>
            <person name="Wincker P."/>
            <person name="Souciet J.-L."/>
        </authorList>
    </citation>
    <scope>NUCLEOTIDE SEQUENCE [LARGE SCALE GENOMIC DNA]</scope>
    <source>
        <strain>ATCC 2001 / BCRC 20586 / JCM 3761 / NBRC 0622 / NRRL Y-65 / CBS 138</strain>
    </source>
</reference>
<accession>Q6FRU4</accession>